<sequence>MDTEGFGELLQQAEQLAAETEGISELPHVERNLQEIQQAGERLRSRTLTRTSQETADVKASVLLGSRGLDISHISQRLESLSAATTFEPLEPVKDTDIQGFLKNEKDNALLSAIEESRKRTFGMAEEYHRESMLVEWEQVKQRILHTLLASGEDALDFTQESEPSYISDAGPPGRSSLDSIEMAYARQIYIYNEKIVNGHLQPNLLDLCASVTELDDKNISDMWAMVKQMTDVLLVPATDALKSRNSVEVRMEFVRQALGYLEQSYKNYTLVTVFGNLHQAQLGGVPGTYQLVRSFLNIKLPAPLPGLQDGEVEGHPVWALIYYCMRCGDLLAASQVVNRAQHQLGEFKTWFQEYMNSKDRRLSPATENKLRLHYRRALRNNTDPYKRAVYCIIGRCDVTDNQSEVADKTEDYLWLKLNQVCFDDDGTSSPQDRLTLSQFQKQLLEDYGESHFTVNQQPFLYFQVLFLTAQFEAAIAFLFRMERLRCHAVHVALVLFELKLLLKSSGQSAQLLSHEPGDPPCMRRLNFVRLLMLYTRKFESTDPREALQYFYFLRDEKDSQGENMFLRCVSELVIESREFDMILGKLENDGSRKPGVIDKFTSDTKPIINKVASVAENKGLFEEAAKLYDLAKNADKVLELMNKLLSPIVPQISAPQSNKERLKNMALSIAERYRAQGISANKFVDSTFYLLLDLITFFDEYHSGHIDRAFDIIDRLKLVPLNQESVEERVAAFRNFSDEIRHNLSEVLLATMNILFTQFKRLKGTSPSSATRPQRVIEDRDSQLRSQARALITFAGMIPYRTSGDTNARLVQMEVLMN</sequence>
<organism>
    <name type="scientific">Bos taurus</name>
    <name type="common">Bovine</name>
    <dbReference type="NCBI Taxonomy" id="9913"/>
    <lineage>
        <taxon>Eukaryota</taxon>
        <taxon>Metazoa</taxon>
        <taxon>Chordata</taxon>
        <taxon>Craniata</taxon>
        <taxon>Vertebrata</taxon>
        <taxon>Euteleostomi</taxon>
        <taxon>Mammalia</taxon>
        <taxon>Eutheria</taxon>
        <taxon>Laurasiatheria</taxon>
        <taxon>Artiodactyla</taxon>
        <taxon>Ruminantia</taxon>
        <taxon>Pecora</taxon>
        <taxon>Bovidae</taxon>
        <taxon>Bovinae</taxon>
        <taxon>Bos</taxon>
    </lineage>
</organism>
<comment type="function">
    <text evidence="3">Plays a role in the nuclear pore complex (NPC) assembly and/or maintenance. May anchor nucleoporins, but not NUP153 and TPR, to the NPC. During renal development, regulates podocyte migration and proliferation through SMAD4 signaling.</text>
</comment>
<comment type="subunit">
    <text evidence="3">Part of the nuclear pore complex (NPC). Component of the p62 complex, a complex composed of NUP62 and NUP54. Forms a complex with NUP35, NUP155, NUP205 and lamin B; the interaction with NUP35 is direct. Does not interact with TPR. Interacts with SMAD4 and IPO7; translocates SMAD4 to the nucleus through the NPC upon BMP7 stimulation resulting in activation of SMAD4 signaling.</text>
</comment>
<comment type="subcellular location">
    <subcellularLocation>
        <location evidence="2">Nucleus membrane</location>
        <topology evidence="2">Peripheral membrane protein</topology>
    </subcellularLocation>
    <subcellularLocation>
        <location evidence="3">Nucleus</location>
        <location evidence="3">Nuclear pore complex</location>
    </subcellularLocation>
    <subcellularLocation>
        <location evidence="3">Nucleus envelope</location>
    </subcellularLocation>
    <text evidence="1">Localizes at the nuclear basket and at or near the nuclear entry to the gated channel of the pore.</text>
</comment>
<comment type="similarity">
    <text evidence="4">Belongs to the nucleoporin interacting component (NIC) family.</text>
</comment>
<gene>
    <name type="primary">NUP93</name>
</gene>
<reference key="1">
    <citation type="submission" date="2007-06" db="EMBL/GenBank/DDBJ databases">
        <authorList>
            <consortium name="NIH - Mammalian Gene Collection (MGC) project"/>
        </authorList>
    </citation>
    <scope>NUCLEOTIDE SEQUENCE [LARGE SCALE MRNA]</scope>
    <source>
        <strain>Hereford</strain>
        <tissue>Thymus</tissue>
    </source>
</reference>
<feature type="chain" id="PRO_0000356294" description="Nuclear pore complex protein Nup93">
    <location>
        <begin position="1"/>
        <end position="819"/>
    </location>
</feature>
<feature type="modified residue" description="Phosphothreonine" evidence="3">
    <location>
        <position position="49"/>
    </location>
</feature>
<feature type="modified residue" description="Phosphoserine" evidence="3">
    <location>
        <position position="52"/>
    </location>
</feature>
<feature type="modified residue" description="Phosphoserine" evidence="3">
    <location>
        <position position="66"/>
    </location>
</feature>
<feature type="modified residue" description="Phosphoserine" evidence="3">
    <location>
        <position position="72"/>
    </location>
</feature>
<feature type="modified residue" description="Phosphoserine" evidence="3">
    <location>
        <position position="75"/>
    </location>
</feature>
<feature type="modified residue" description="Phosphoserine" evidence="3">
    <location>
        <position position="80"/>
    </location>
</feature>
<feature type="modified residue" description="Phosphoserine" evidence="3">
    <location>
        <position position="430"/>
    </location>
</feature>
<feature type="modified residue" description="Phosphoserine" evidence="3">
    <location>
        <position position="767"/>
    </location>
</feature>
<dbReference type="EMBL" id="BC142296">
    <property type="protein sequence ID" value="AAI42297.1"/>
    <property type="molecule type" value="mRNA"/>
</dbReference>
<dbReference type="RefSeq" id="NP_001092391.1">
    <property type="nucleotide sequence ID" value="NM_001098921.1"/>
</dbReference>
<dbReference type="RefSeq" id="XP_059732595.1">
    <property type="nucleotide sequence ID" value="XM_059876612.1"/>
</dbReference>
<dbReference type="SMR" id="A5PJZ5"/>
<dbReference type="FunCoup" id="A5PJZ5">
    <property type="interactions" value="5453"/>
</dbReference>
<dbReference type="STRING" id="9913.ENSBTAP00000067770"/>
<dbReference type="PaxDb" id="9913-ENSBTAP00000008683"/>
<dbReference type="PeptideAtlas" id="A5PJZ5"/>
<dbReference type="Ensembl" id="ENSBTAT00000008683.5">
    <property type="protein sequence ID" value="ENSBTAP00000008683.4"/>
    <property type="gene ID" value="ENSBTAG00000006611.6"/>
</dbReference>
<dbReference type="GeneID" id="510004"/>
<dbReference type="KEGG" id="bta:510004"/>
<dbReference type="CTD" id="9688"/>
<dbReference type="VEuPathDB" id="HostDB:ENSBTAG00000006611"/>
<dbReference type="VGNC" id="VGNC:32366">
    <property type="gene designation" value="NUP93"/>
</dbReference>
<dbReference type="eggNOG" id="KOG2168">
    <property type="taxonomic scope" value="Eukaryota"/>
</dbReference>
<dbReference type="GeneTree" id="ENSGT00390000016353"/>
<dbReference type="HOGENOM" id="CLU_011846_1_0_1"/>
<dbReference type="InParanoid" id="A5PJZ5"/>
<dbReference type="OMA" id="LLMCGQF"/>
<dbReference type="OrthoDB" id="1918363at2759"/>
<dbReference type="TreeFam" id="TF315118"/>
<dbReference type="Reactome" id="R-BTA-159227">
    <property type="pathway name" value="Transport of the SLBP independent Mature mRNA"/>
</dbReference>
<dbReference type="Reactome" id="R-BTA-159230">
    <property type="pathway name" value="Transport of the SLBP Dependant Mature mRNA"/>
</dbReference>
<dbReference type="Reactome" id="R-BTA-159231">
    <property type="pathway name" value="Transport of Mature mRNA Derived from an Intronless Transcript"/>
</dbReference>
<dbReference type="Reactome" id="R-BTA-159236">
    <property type="pathway name" value="Transport of Mature mRNA derived from an Intron-Containing Transcript"/>
</dbReference>
<dbReference type="Reactome" id="R-BTA-191859">
    <property type="pathway name" value="snRNP Assembly"/>
</dbReference>
<dbReference type="Reactome" id="R-BTA-3108214">
    <property type="pathway name" value="SUMOylation of DNA damage response and repair proteins"/>
</dbReference>
<dbReference type="Reactome" id="R-BTA-3232142">
    <property type="pathway name" value="SUMOylation of ubiquitinylation proteins"/>
</dbReference>
<dbReference type="Reactome" id="R-BTA-3301854">
    <property type="pathway name" value="Nuclear Pore Complex (NPC) Disassembly"/>
</dbReference>
<dbReference type="Reactome" id="R-BTA-3371453">
    <property type="pathway name" value="Regulation of HSF1-mediated heat shock response"/>
</dbReference>
<dbReference type="Reactome" id="R-BTA-4085377">
    <property type="pathway name" value="SUMOylation of SUMOylation proteins"/>
</dbReference>
<dbReference type="Reactome" id="R-BTA-4551638">
    <property type="pathway name" value="SUMOylation of chromatin organization proteins"/>
</dbReference>
<dbReference type="Reactome" id="R-BTA-4570464">
    <property type="pathway name" value="SUMOylation of RNA binding proteins"/>
</dbReference>
<dbReference type="Reactome" id="R-BTA-4615885">
    <property type="pathway name" value="SUMOylation of DNA replication proteins"/>
</dbReference>
<dbReference type="Reactome" id="R-BTA-5578749">
    <property type="pathway name" value="Transcriptional regulation by small RNAs"/>
</dbReference>
<dbReference type="Reactome" id="R-BTA-9615933">
    <property type="pathway name" value="Postmitotic nuclear pore complex (NPC) reformation"/>
</dbReference>
<dbReference type="Proteomes" id="UP000009136">
    <property type="component" value="Chromosome 18"/>
</dbReference>
<dbReference type="Bgee" id="ENSBTAG00000006611">
    <property type="expression patterns" value="Expressed in oocyte and 107 other cell types or tissues"/>
</dbReference>
<dbReference type="GO" id="GO:0005813">
    <property type="term" value="C:centrosome"/>
    <property type="evidence" value="ECO:0007669"/>
    <property type="project" value="Ensembl"/>
</dbReference>
<dbReference type="GO" id="GO:0005635">
    <property type="term" value="C:nuclear envelope"/>
    <property type="evidence" value="ECO:0000250"/>
    <property type="project" value="UniProtKB"/>
</dbReference>
<dbReference type="GO" id="GO:0031965">
    <property type="term" value="C:nuclear membrane"/>
    <property type="evidence" value="ECO:0000250"/>
    <property type="project" value="UniProtKB"/>
</dbReference>
<dbReference type="GO" id="GO:0034399">
    <property type="term" value="C:nuclear periphery"/>
    <property type="evidence" value="ECO:0000250"/>
    <property type="project" value="UniProtKB"/>
</dbReference>
<dbReference type="GO" id="GO:0005643">
    <property type="term" value="C:nuclear pore"/>
    <property type="evidence" value="ECO:0000250"/>
    <property type="project" value="UniProtKB"/>
</dbReference>
<dbReference type="GO" id="GO:0017056">
    <property type="term" value="F:structural constituent of nuclear pore"/>
    <property type="evidence" value="ECO:0000250"/>
    <property type="project" value="UniProtKB"/>
</dbReference>
<dbReference type="GO" id="GO:0006998">
    <property type="term" value="P:nuclear envelope organization"/>
    <property type="evidence" value="ECO:0000250"/>
    <property type="project" value="UniProtKB"/>
</dbReference>
<dbReference type="GO" id="GO:0051292">
    <property type="term" value="P:nuclear pore complex assembly"/>
    <property type="evidence" value="ECO:0000250"/>
    <property type="project" value="UniProtKB"/>
</dbReference>
<dbReference type="GO" id="GO:0016973">
    <property type="term" value="P:poly(A)+ mRNA export from nucleus"/>
    <property type="evidence" value="ECO:0000318"/>
    <property type="project" value="GO_Central"/>
</dbReference>
<dbReference type="GO" id="GO:0060391">
    <property type="term" value="P:positive regulation of SMAD protein signal transduction"/>
    <property type="evidence" value="ECO:0000250"/>
    <property type="project" value="UniProtKB"/>
</dbReference>
<dbReference type="GO" id="GO:0006606">
    <property type="term" value="P:protein import into nucleus"/>
    <property type="evidence" value="ECO:0000318"/>
    <property type="project" value="GO_Central"/>
</dbReference>
<dbReference type="InterPro" id="IPR007231">
    <property type="entry name" value="Nucleoporin_int_Nup93/Nic96"/>
</dbReference>
<dbReference type="PANTHER" id="PTHR11225:SF4">
    <property type="entry name" value="NUCLEAR PORE COMPLEX PROTEIN NUP93"/>
    <property type="match status" value="1"/>
</dbReference>
<dbReference type="PANTHER" id="PTHR11225">
    <property type="entry name" value="NUCLEAR PORE COMPLEX PROTEIN NUP93 NUCLEOPORIN NUP93 DEAD EYE PROTEIN"/>
    <property type="match status" value="1"/>
</dbReference>
<dbReference type="Pfam" id="PF04097">
    <property type="entry name" value="Nic96"/>
    <property type="match status" value="1"/>
</dbReference>
<name>NUP93_BOVIN</name>
<evidence type="ECO:0000250" key="1"/>
<evidence type="ECO:0000250" key="2">
    <source>
        <dbReference type="UniProtKB" id="Q66HC5"/>
    </source>
</evidence>
<evidence type="ECO:0000250" key="3">
    <source>
        <dbReference type="UniProtKB" id="Q8N1F7"/>
    </source>
</evidence>
<evidence type="ECO:0000305" key="4"/>
<proteinExistence type="evidence at transcript level"/>
<keyword id="KW-0472">Membrane</keyword>
<keyword id="KW-0509">mRNA transport</keyword>
<keyword id="KW-0906">Nuclear pore complex</keyword>
<keyword id="KW-0539">Nucleus</keyword>
<keyword id="KW-0597">Phosphoprotein</keyword>
<keyword id="KW-0653">Protein transport</keyword>
<keyword id="KW-1185">Reference proteome</keyword>
<keyword id="KW-0811">Translocation</keyword>
<keyword id="KW-0813">Transport</keyword>
<accession>A5PJZ5</accession>
<protein>
    <recommendedName>
        <fullName>Nuclear pore complex protein Nup93</fullName>
    </recommendedName>
    <alternativeName>
        <fullName>93 kDa nucleoporin</fullName>
    </alternativeName>
    <alternativeName>
        <fullName>Nucleoporin Nup93</fullName>
    </alternativeName>
</protein>